<accession>Q47J80</accession>
<gene>
    <name evidence="1" type="primary">rpsM</name>
    <name type="ordered locus">Daro_0342</name>
</gene>
<reference key="1">
    <citation type="journal article" date="2009" name="BMC Genomics">
        <title>Metabolic analysis of the soil microbe Dechloromonas aromatica str. RCB: indications of a surprisingly complex life-style and cryptic anaerobic pathways for aromatic degradation.</title>
        <authorList>
            <person name="Salinero K.K."/>
            <person name="Keller K."/>
            <person name="Feil W.S."/>
            <person name="Feil H."/>
            <person name="Trong S."/>
            <person name="Di Bartolo G."/>
            <person name="Lapidus A."/>
        </authorList>
    </citation>
    <scope>NUCLEOTIDE SEQUENCE [LARGE SCALE GENOMIC DNA]</scope>
    <source>
        <strain>RCB</strain>
    </source>
</reference>
<name>RS13_DECAR</name>
<protein>
    <recommendedName>
        <fullName evidence="1">Small ribosomal subunit protein uS13</fullName>
    </recommendedName>
    <alternativeName>
        <fullName evidence="3">30S ribosomal protein S13</fullName>
    </alternativeName>
</protein>
<keyword id="KW-0687">Ribonucleoprotein</keyword>
<keyword id="KW-0689">Ribosomal protein</keyword>
<keyword id="KW-0694">RNA-binding</keyword>
<keyword id="KW-0699">rRNA-binding</keyword>
<keyword id="KW-0820">tRNA-binding</keyword>
<comment type="function">
    <text evidence="1">Located at the top of the head of the 30S subunit, it contacts several helices of the 16S rRNA. In the 70S ribosome it contacts the 23S rRNA (bridge B1a) and protein L5 of the 50S subunit (bridge B1b), connecting the 2 subunits; these bridges are implicated in subunit movement. Contacts the tRNAs in the A and P-sites.</text>
</comment>
<comment type="subunit">
    <text evidence="1">Part of the 30S ribosomal subunit. Forms a loose heterodimer with protein S19. Forms two bridges to the 50S subunit in the 70S ribosome.</text>
</comment>
<comment type="similarity">
    <text evidence="1">Belongs to the universal ribosomal protein uS13 family.</text>
</comment>
<sequence>MARIAGVNIPNHQHAEIALTAIFGIGRTRAQKICDAAGVGRNVKMKDLSDSDMDRLRDEVGKFTVEGDLRREVTMNIKRLMDLGCYRGLRHRKGLPCRGQRTRTNARTRKGPRKAIAGKK</sequence>
<evidence type="ECO:0000255" key="1">
    <source>
        <dbReference type="HAMAP-Rule" id="MF_01315"/>
    </source>
</evidence>
<evidence type="ECO:0000256" key="2">
    <source>
        <dbReference type="SAM" id="MobiDB-lite"/>
    </source>
</evidence>
<evidence type="ECO:0000305" key="3"/>
<dbReference type="EMBL" id="CP000089">
    <property type="protein sequence ID" value="AAZ45101.1"/>
    <property type="molecule type" value="Genomic_DNA"/>
</dbReference>
<dbReference type="SMR" id="Q47J80"/>
<dbReference type="STRING" id="159087.Daro_0342"/>
<dbReference type="KEGG" id="dar:Daro_0342"/>
<dbReference type="eggNOG" id="COG0099">
    <property type="taxonomic scope" value="Bacteria"/>
</dbReference>
<dbReference type="HOGENOM" id="CLU_103849_1_2_4"/>
<dbReference type="OrthoDB" id="9803610at2"/>
<dbReference type="GO" id="GO:0005829">
    <property type="term" value="C:cytosol"/>
    <property type="evidence" value="ECO:0007669"/>
    <property type="project" value="TreeGrafter"/>
</dbReference>
<dbReference type="GO" id="GO:0015935">
    <property type="term" value="C:small ribosomal subunit"/>
    <property type="evidence" value="ECO:0007669"/>
    <property type="project" value="TreeGrafter"/>
</dbReference>
<dbReference type="GO" id="GO:0019843">
    <property type="term" value="F:rRNA binding"/>
    <property type="evidence" value="ECO:0007669"/>
    <property type="project" value="UniProtKB-UniRule"/>
</dbReference>
<dbReference type="GO" id="GO:0003735">
    <property type="term" value="F:structural constituent of ribosome"/>
    <property type="evidence" value="ECO:0007669"/>
    <property type="project" value="InterPro"/>
</dbReference>
<dbReference type="GO" id="GO:0000049">
    <property type="term" value="F:tRNA binding"/>
    <property type="evidence" value="ECO:0007669"/>
    <property type="project" value="UniProtKB-UniRule"/>
</dbReference>
<dbReference type="GO" id="GO:0006412">
    <property type="term" value="P:translation"/>
    <property type="evidence" value="ECO:0007669"/>
    <property type="project" value="UniProtKB-UniRule"/>
</dbReference>
<dbReference type="FunFam" id="1.10.8.50:FF:000001">
    <property type="entry name" value="30S ribosomal protein S13"/>
    <property type="match status" value="1"/>
</dbReference>
<dbReference type="FunFam" id="4.10.910.10:FF:000001">
    <property type="entry name" value="30S ribosomal protein S13"/>
    <property type="match status" value="1"/>
</dbReference>
<dbReference type="Gene3D" id="1.10.8.50">
    <property type="match status" value="1"/>
</dbReference>
<dbReference type="Gene3D" id="4.10.910.10">
    <property type="entry name" value="30s ribosomal protein s13, domain 2"/>
    <property type="match status" value="1"/>
</dbReference>
<dbReference type="HAMAP" id="MF_01315">
    <property type="entry name" value="Ribosomal_uS13"/>
    <property type="match status" value="1"/>
</dbReference>
<dbReference type="InterPro" id="IPR027437">
    <property type="entry name" value="Rbsml_uS13_C"/>
</dbReference>
<dbReference type="InterPro" id="IPR001892">
    <property type="entry name" value="Ribosomal_uS13"/>
</dbReference>
<dbReference type="InterPro" id="IPR010979">
    <property type="entry name" value="Ribosomal_uS13-like_H2TH"/>
</dbReference>
<dbReference type="InterPro" id="IPR019980">
    <property type="entry name" value="Ribosomal_uS13_bac-type"/>
</dbReference>
<dbReference type="InterPro" id="IPR018269">
    <property type="entry name" value="Ribosomal_uS13_CS"/>
</dbReference>
<dbReference type="NCBIfam" id="TIGR03631">
    <property type="entry name" value="uS13_bact"/>
    <property type="match status" value="1"/>
</dbReference>
<dbReference type="PANTHER" id="PTHR10871">
    <property type="entry name" value="30S RIBOSOMAL PROTEIN S13/40S RIBOSOMAL PROTEIN S18"/>
    <property type="match status" value="1"/>
</dbReference>
<dbReference type="PANTHER" id="PTHR10871:SF1">
    <property type="entry name" value="SMALL RIBOSOMAL SUBUNIT PROTEIN US13M"/>
    <property type="match status" value="1"/>
</dbReference>
<dbReference type="Pfam" id="PF00416">
    <property type="entry name" value="Ribosomal_S13"/>
    <property type="match status" value="1"/>
</dbReference>
<dbReference type="PIRSF" id="PIRSF002134">
    <property type="entry name" value="Ribosomal_S13"/>
    <property type="match status" value="1"/>
</dbReference>
<dbReference type="SUPFAM" id="SSF46946">
    <property type="entry name" value="S13-like H2TH domain"/>
    <property type="match status" value="1"/>
</dbReference>
<dbReference type="PROSITE" id="PS00646">
    <property type="entry name" value="RIBOSOMAL_S13_1"/>
    <property type="match status" value="1"/>
</dbReference>
<dbReference type="PROSITE" id="PS50159">
    <property type="entry name" value="RIBOSOMAL_S13_2"/>
    <property type="match status" value="1"/>
</dbReference>
<proteinExistence type="inferred from homology"/>
<feature type="chain" id="PRO_0000230497" description="Small ribosomal subunit protein uS13">
    <location>
        <begin position="1"/>
        <end position="120"/>
    </location>
</feature>
<feature type="region of interest" description="Disordered" evidence="2">
    <location>
        <begin position="96"/>
        <end position="120"/>
    </location>
</feature>
<organism>
    <name type="scientific">Dechloromonas aromatica (strain RCB)</name>
    <dbReference type="NCBI Taxonomy" id="159087"/>
    <lineage>
        <taxon>Bacteria</taxon>
        <taxon>Pseudomonadati</taxon>
        <taxon>Pseudomonadota</taxon>
        <taxon>Betaproteobacteria</taxon>
        <taxon>Rhodocyclales</taxon>
        <taxon>Azonexaceae</taxon>
        <taxon>Dechloromonas</taxon>
    </lineage>
</organism>